<accession>A4VVK0</accession>
<sequence>MAGSLNEIKSKIASTKKTSQITGAMQMVSASKLAKSEQLAQSFQIYASKVRQITTDLLRGELMASDTSNPMLIRRPVQKSGYIVITSDSGLKGSYNSSILKAVMGMIEQDHDSKDEYEIIAIGSMGADFFRARGINPVFELRGLADNPSFEEVQKIISKSVEMYKNELFDELYVCYNHHVNSLTSQVRVQQMLPVEDLDHNEADGYTATFELEPNREVILEQLLTQYAESTIYGAILDAKTAENAAGMTAMQTATDNAKNVINDLTIQYNRARQAAITQEITEIVAGASALE</sequence>
<gene>
    <name evidence="1" type="primary">atpG</name>
    <name type="ordered locus">SSU05_1173</name>
</gene>
<feature type="chain" id="PRO_1000053356" description="ATP synthase gamma chain">
    <location>
        <begin position="1"/>
        <end position="292"/>
    </location>
</feature>
<protein>
    <recommendedName>
        <fullName evidence="1">ATP synthase gamma chain</fullName>
    </recommendedName>
    <alternativeName>
        <fullName evidence="1">ATP synthase F1 sector gamma subunit</fullName>
    </alternativeName>
    <alternativeName>
        <fullName evidence="1">F-ATPase gamma subunit</fullName>
    </alternativeName>
</protein>
<comment type="function">
    <text evidence="1">Produces ATP from ADP in the presence of a proton gradient across the membrane. The gamma chain is believed to be important in regulating ATPase activity and the flow of protons through the CF(0) complex.</text>
</comment>
<comment type="subunit">
    <text evidence="1">F-type ATPases have 2 components, CF(1) - the catalytic core - and CF(0) - the membrane proton channel. CF(1) has five subunits: alpha(3), beta(3), gamma(1), delta(1), epsilon(1). CF(0) has three main subunits: a, b and c.</text>
</comment>
<comment type="subcellular location">
    <subcellularLocation>
        <location evidence="1">Cell membrane</location>
        <topology evidence="1">Peripheral membrane protein</topology>
    </subcellularLocation>
</comment>
<comment type="similarity">
    <text evidence="1">Belongs to the ATPase gamma chain family.</text>
</comment>
<evidence type="ECO:0000255" key="1">
    <source>
        <dbReference type="HAMAP-Rule" id="MF_00815"/>
    </source>
</evidence>
<dbReference type="EMBL" id="CP000407">
    <property type="protein sequence ID" value="ABP90139.1"/>
    <property type="molecule type" value="Genomic_DNA"/>
</dbReference>
<dbReference type="SMR" id="A4VVK0"/>
<dbReference type="STRING" id="391295.SSU05_1173"/>
<dbReference type="KEGG" id="ssu:SSU05_1173"/>
<dbReference type="eggNOG" id="COG0224">
    <property type="taxonomic scope" value="Bacteria"/>
</dbReference>
<dbReference type="HOGENOM" id="CLU_050669_0_1_9"/>
<dbReference type="GO" id="GO:0005886">
    <property type="term" value="C:plasma membrane"/>
    <property type="evidence" value="ECO:0007669"/>
    <property type="project" value="UniProtKB-SubCell"/>
</dbReference>
<dbReference type="GO" id="GO:0045259">
    <property type="term" value="C:proton-transporting ATP synthase complex"/>
    <property type="evidence" value="ECO:0007669"/>
    <property type="project" value="UniProtKB-KW"/>
</dbReference>
<dbReference type="GO" id="GO:0005524">
    <property type="term" value="F:ATP binding"/>
    <property type="evidence" value="ECO:0007669"/>
    <property type="project" value="UniProtKB-UniRule"/>
</dbReference>
<dbReference type="GO" id="GO:0046933">
    <property type="term" value="F:proton-transporting ATP synthase activity, rotational mechanism"/>
    <property type="evidence" value="ECO:0007669"/>
    <property type="project" value="UniProtKB-UniRule"/>
</dbReference>
<dbReference type="GO" id="GO:0042777">
    <property type="term" value="P:proton motive force-driven plasma membrane ATP synthesis"/>
    <property type="evidence" value="ECO:0007669"/>
    <property type="project" value="UniProtKB-UniRule"/>
</dbReference>
<dbReference type="CDD" id="cd12151">
    <property type="entry name" value="F1-ATPase_gamma"/>
    <property type="match status" value="1"/>
</dbReference>
<dbReference type="FunFam" id="3.40.1380.10:FF:000002">
    <property type="entry name" value="ATP synthase gamma chain"/>
    <property type="match status" value="1"/>
</dbReference>
<dbReference type="Gene3D" id="3.40.1380.10">
    <property type="match status" value="1"/>
</dbReference>
<dbReference type="Gene3D" id="1.10.287.80">
    <property type="entry name" value="ATP synthase, gamma subunit, helix hairpin domain"/>
    <property type="match status" value="2"/>
</dbReference>
<dbReference type="HAMAP" id="MF_00815">
    <property type="entry name" value="ATP_synth_gamma_bact"/>
    <property type="match status" value="1"/>
</dbReference>
<dbReference type="InterPro" id="IPR035968">
    <property type="entry name" value="ATP_synth_F1_ATPase_gsu"/>
</dbReference>
<dbReference type="InterPro" id="IPR000131">
    <property type="entry name" value="ATP_synth_F1_gsu"/>
</dbReference>
<dbReference type="InterPro" id="IPR023632">
    <property type="entry name" value="ATP_synth_F1_gsu_CS"/>
</dbReference>
<dbReference type="NCBIfam" id="TIGR01146">
    <property type="entry name" value="ATPsyn_F1gamma"/>
    <property type="match status" value="1"/>
</dbReference>
<dbReference type="NCBIfam" id="NF004147">
    <property type="entry name" value="PRK05621.2-1"/>
    <property type="match status" value="1"/>
</dbReference>
<dbReference type="PANTHER" id="PTHR11693">
    <property type="entry name" value="ATP SYNTHASE GAMMA CHAIN"/>
    <property type="match status" value="1"/>
</dbReference>
<dbReference type="PANTHER" id="PTHR11693:SF22">
    <property type="entry name" value="ATP SYNTHASE SUBUNIT GAMMA, MITOCHONDRIAL"/>
    <property type="match status" value="1"/>
</dbReference>
<dbReference type="Pfam" id="PF00231">
    <property type="entry name" value="ATP-synt"/>
    <property type="match status" value="1"/>
</dbReference>
<dbReference type="PRINTS" id="PR00126">
    <property type="entry name" value="ATPASEGAMMA"/>
</dbReference>
<dbReference type="SUPFAM" id="SSF52943">
    <property type="entry name" value="ATP synthase (F1-ATPase), gamma subunit"/>
    <property type="match status" value="1"/>
</dbReference>
<dbReference type="PROSITE" id="PS00153">
    <property type="entry name" value="ATPASE_GAMMA"/>
    <property type="match status" value="1"/>
</dbReference>
<reference key="1">
    <citation type="journal article" date="2007" name="PLoS ONE">
        <title>A glimpse of streptococcal toxic shock syndrome from comparative genomics of S. suis 2 Chinese isolates.</title>
        <authorList>
            <person name="Chen C."/>
            <person name="Tang J."/>
            <person name="Dong W."/>
            <person name="Wang C."/>
            <person name="Feng Y."/>
            <person name="Wang J."/>
            <person name="Zheng F."/>
            <person name="Pan X."/>
            <person name="Liu D."/>
            <person name="Li M."/>
            <person name="Song Y."/>
            <person name="Zhu X."/>
            <person name="Sun H."/>
            <person name="Feng T."/>
            <person name="Guo Z."/>
            <person name="Ju A."/>
            <person name="Ge J."/>
            <person name="Dong Y."/>
            <person name="Sun W."/>
            <person name="Jiang Y."/>
            <person name="Wang J."/>
            <person name="Yan J."/>
            <person name="Yang H."/>
            <person name="Wang X."/>
            <person name="Gao G.F."/>
            <person name="Yang R."/>
            <person name="Wang J."/>
            <person name="Yu J."/>
        </authorList>
    </citation>
    <scope>NUCLEOTIDE SEQUENCE [LARGE SCALE GENOMIC DNA]</scope>
    <source>
        <strain>05ZYH33</strain>
    </source>
</reference>
<keyword id="KW-0066">ATP synthesis</keyword>
<keyword id="KW-1003">Cell membrane</keyword>
<keyword id="KW-0139">CF(1)</keyword>
<keyword id="KW-0375">Hydrogen ion transport</keyword>
<keyword id="KW-0406">Ion transport</keyword>
<keyword id="KW-0472">Membrane</keyword>
<keyword id="KW-0813">Transport</keyword>
<proteinExistence type="inferred from homology"/>
<organism>
    <name type="scientific">Streptococcus suis (strain 05ZYH33)</name>
    <dbReference type="NCBI Taxonomy" id="391295"/>
    <lineage>
        <taxon>Bacteria</taxon>
        <taxon>Bacillati</taxon>
        <taxon>Bacillota</taxon>
        <taxon>Bacilli</taxon>
        <taxon>Lactobacillales</taxon>
        <taxon>Streptococcaceae</taxon>
        <taxon>Streptococcus</taxon>
    </lineage>
</organism>
<name>ATPG_STRSY</name>